<feature type="chain" id="PRO_1000139912" description="HPr kinase/phosphorylase">
    <location>
        <begin position="1"/>
        <end position="316"/>
    </location>
</feature>
<feature type="region of interest" description="Important for the catalytic mechanism of both phosphorylation and dephosphorylation" evidence="1">
    <location>
        <begin position="206"/>
        <end position="215"/>
    </location>
</feature>
<feature type="region of interest" description="Important for the catalytic mechanism of dephosphorylation" evidence="1">
    <location>
        <begin position="272"/>
        <end position="277"/>
    </location>
</feature>
<feature type="active site" evidence="1">
    <location>
        <position position="143"/>
    </location>
</feature>
<feature type="active site" evidence="1">
    <location>
        <position position="164"/>
    </location>
</feature>
<feature type="active site" description="Proton acceptor; for phosphorylation activity. Proton donor; for dephosphorylation activity" evidence="1">
    <location>
        <position position="182"/>
    </location>
</feature>
<feature type="active site" evidence="1">
    <location>
        <position position="251"/>
    </location>
</feature>
<feature type="binding site" evidence="1">
    <location>
        <begin position="158"/>
        <end position="165"/>
    </location>
    <ligand>
        <name>ATP</name>
        <dbReference type="ChEBI" id="CHEBI:30616"/>
    </ligand>
</feature>
<feature type="binding site" evidence="1">
    <location>
        <position position="165"/>
    </location>
    <ligand>
        <name>Mg(2+)</name>
        <dbReference type="ChEBI" id="CHEBI:18420"/>
    </ligand>
</feature>
<feature type="binding site" evidence="1">
    <location>
        <position position="207"/>
    </location>
    <ligand>
        <name>Mg(2+)</name>
        <dbReference type="ChEBI" id="CHEBI:18420"/>
    </ligand>
</feature>
<name>HPRK_STRMK</name>
<organism>
    <name type="scientific">Stenotrophomonas maltophilia (strain K279a)</name>
    <dbReference type="NCBI Taxonomy" id="522373"/>
    <lineage>
        <taxon>Bacteria</taxon>
        <taxon>Pseudomonadati</taxon>
        <taxon>Pseudomonadota</taxon>
        <taxon>Gammaproteobacteria</taxon>
        <taxon>Lysobacterales</taxon>
        <taxon>Lysobacteraceae</taxon>
        <taxon>Stenotrophomonas</taxon>
        <taxon>Stenotrophomonas maltophilia group</taxon>
    </lineage>
</organism>
<protein>
    <recommendedName>
        <fullName evidence="1">HPr kinase/phosphorylase</fullName>
        <shortName evidence="1">HPrK/P</shortName>
        <ecNumber evidence="1">2.7.11.-</ecNumber>
        <ecNumber evidence="1">2.7.4.-</ecNumber>
    </recommendedName>
    <alternativeName>
        <fullName evidence="1">HPr(Ser) kinase/phosphorylase</fullName>
    </alternativeName>
</protein>
<sequence>MNTSITARELFEQQRERLGLRWAAGKSGEKRELEAGNTVSRRPSLAGYLNAIYPNKVQILGTEELSWLDALEPRQRWETIEKIMQSHPLALVLTRNQACPEDLRAAADESGTPLWLSPKRGHELLNHLSYHLARTLAPRVILHGVFMEIYSIGVLITGEAGSGKSELALELLSRGHRLVADDAPEFTQIAPDVLDGTCPELLQDLLEVRGLGVLNVREMFGDTAVKKNKYLRLIVHLTKPMTEPTPHGYERLTGDSGTRHVLDLDVPLITLPVMPGRNLAVLTEAATRLHILRTKGIDPAAMFIARHSNLLERRTP</sequence>
<gene>
    <name evidence="1" type="primary">hprK</name>
    <name type="ordered locus">Smlt1109</name>
</gene>
<evidence type="ECO:0000255" key="1">
    <source>
        <dbReference type="HAMAP-Rule" id="MF_01249"/>
    </source>
</evidence>
<accession>B2FRW1</accession>
<reference key="1">
    <citation type="journal article" date="2008" name="Genome Biol.">
        <title>The complete genome, comparative and functional analysis of Stenotrophomonas maltophilia reveals an organism heavily shielded by drug resistance determinants.</title>
        <authorList>
            <person name="Crossman L.C."/>
            <person name="Gould V.C."/>
            <person name="Dow J.M."/>
            <person name="Vernikos G.S."/>
            <person name="Okazaki A."/>
            <person name="Sebaihia M."/>
            <person name="Saunders D."/>
            <person name="Arrowsmith C."/>
            <person name="Carver T."/>
            <person name="Peters N."/>
            <person name="Adlem E."/>
            <person name="Kerhornou A."/>
            <person name="Lord A."/>
            <person name="Murphy L."/>
            <person name="Seeger K."/>
            <person name="Squares R."/>
            <person name="Rutter S."/>
            <person name="Quail M.A."/>
            <person name="Rajandream M.A."/>
            <person name="Harris D."/>
            <person name="Churcher C."/>
            <person name="Bentley S.D."/>
            <person name="Parkhill J."/>
            <person name="Thomson N.R."/>
            <person name="Avison M.B."/>
        </authorList>
    </citation>
    <scope>NUCLEOTIDE SEQUENCE [LARGE SCALE GENOMIC DNA]</scope>
    <source>
        <strain>K279a</strain>
    </source>
</reference>
<proteinExistence type="inferred from homology"/>
<keyword id="KW-0067">ATP-binding</keyword>
<keyword id="KW-0418">Kinase</keyword>
<keyword id="KW-0460">Magnesium</keyword>
<keyword id="KW-0479">Metal-binding</keyword>
<keyword id="KW-0511">Multifunctional enzyme</keyword>
<keyword id="KW-0547">Nucleotide-binding</keyword>
<keyword id="KW-1185">Reference proteome</keyword>
<keyword id="KW-0723">Serine/threonine-protein kinase</keyword>
<keyword id="KW-0808">Transferase</keyword>
<dbReference type="EC" id="2.7.11.-" evidence="1"/>
<dbReference type="EC" id="2.7.4.-" evidence="1"/>
<dbReference type="EMBL" id="AM743169">
    <property type="protein sequence ID" value="CAQ44666.1"/>
    <property type="molecule type" value="Genomic_DNA"/>
</dbReference>
<dbReference type="RefSeq" id="WP_005408388.1">
    <property type="nucleotide sequence ID" value="NC_010943.1"/>
</dbReference>
<dbReference type="SMR" id="B2FRW1"/>
<dbReference type="EnsemblBacteria" id="CAQ44666">
    <property type="protein sequence ID" value="CAQ44666"/>
    <property type="gene ID" value="Smlt1109"/>
</dbReference>
<dbReference type="GeneID" id="97260116"/>
<dbReference type="KEGG" id="sml:Smlt1109"/>
<dbReference type="eggNOG" id="COG1493">
    <property type="taxonomic scope" value="Bacteria"/>
</dbReference>
<dbReference type="HOGENOM" id="CLU_052030_0_2_6"/>
<dbReference type="Proteomes" id="UP000008840">
    <property type="component" value="Chromosome"/>
</dbReference>
<dbReference type="GO" id="GO:0005524">
    <property type="term" value="F:ATP binding"/>
    <property type="evidence" value="ECO:0007669"/>
    <property type="project" value="UniProtKB-UniRule"/>
</dbReference>
<dbReference type="GO" id="GO:0000287">
    <property type="term" value="F:magnesium ion binding"/>
    <property type="evidence" value="ECO:0007669"/>
    <property type="project" value="UniProtKB-UniRule"/>
</dbReference>
<dbReference type="GO" id="GO:0000155">
    <property type="term" value="F:phosphorelay sensor kinase activity"/>
    <property type="evidence" value="ECO:0007669"/>
    <property type="project" value="InterPro"/>
</dbReference>
<dbReference type="GO" id="GO:0004674">
    <property type="term" value="F:protein serine/threonine kinase activity"/>
    <property type="evidence" value="ECO:0007669"/>
    <property type="project" value="UniProtKB-KW"/>
</dbReference>
<dbReference type="GO" id="GO:0004712">
    <property type="term" value="F:protein serine/threonine/tyrosine kinase activity"/>
    <property type="evidence" value="ECO:0007669"/>
    <property type="project" value="UniProtKB-UniRule"/>
</dbReference>
<dbReference type="GO" id="GO:0006109">
    <property type="term" value="P:regulation of carbohydrate metabolic process"/>
    <property type="evidence" value="ECO:0007669"/>
    <property type="project" value="UniProtKB-UniRule"/>
</dbReference>
<dbReference type="CDD" id="cd01918">
    <property type="entry name" value="HprK_C"/>
    <property type="match status" value="1"/>
</dbReference>
<dbReference type="FunFam" id="3.40.50.300:FF:000174">
    <property type="entry name" value="HPr kinase/phosphorylase"/>
    <property type="match status" value="1"/>
</dbReference>
<dbReference type="Gene3D" id="3.40.1390.20">
    <property type="entry name" value="HprK N-terminal domain-like"/>
    <property type="match status" value="1"/>
</dbReference>
<dbReference type="Gene3D" id="3.40.50.300">
    <property type="entry name" value="P-loop containing nucleotide triphosphate hydrolases"/>
    <property type="match status" value="1"/>
</dbReference>
<dbReference type="HAMAP" id="MF_01249">
    <property type="entry name" value="HPr_kinase"/>
    <property type="match status" value="1"/>
</dbReference>
<dbReference type="InterPro" id="IPR003755">
    <property type="entry name" value="HPr(Ser)_kin/Pase"/>
</dbReference>
<dbReference type="InterPro" id="IPR011104">
    <property type="entry name" value="Hpr_kin/Pase_C"/>
</dbReference>
<dbReference type="InterPro" id="IPR011126">
    <property type="entry name" value="Hpr_kin/Pase_Hpr_N"/>
</dbReference>
<dbReference type="InterPro" id="IPR027417">
    <property type="entry name" value="P-loop_NTPase"/>
</dbReference>
<dbReference type="InterPro" id="IPR028979">
    <property type="entry name" value="Ser_kin/Pase_Hpr-like_N_sf"/>
</dbReference>
<dbReference type="NCBIfam" id="TIGR00679">
    <property type="entry name" value="hpr-ser"/>
    <property type="match status" value="1"/>
</dbReference>
<dbReference type="PANTHER" id="PTHR30305:SF1">
    <property type="entry name" value="HPR KINASE_PHOSPHORYLASE"/>
    <property type="match status" value="1"/>
</dbReference>
<dbReference type="PANTHER" id="PTHR30305">
    <property type="entry name" value="PROTEIN YJDM-RELATED"/>
    <property type="match status" value="1"/>
</dbReference>
<dbReference type="Pfam" id="PF07475">
    <property type="entry name" value="Hpr_kinase_C"/>
    <property type="match status" value="1"/>
</dbReference>
<dbReference type="Pfam" id="PF02603">
    <property type="entry name" value="Hpr_kinase_N"/>
    <property type="match status" value="1"/>
</dbReference>
<dbReference type="SUPFAM" id="SSF75138">
    <property type="entry name" value="HprK N-terminal domain-like"/>
    <property type="match status" value="1"/>
</dbReference>
<dbReference type="SUPFAM" id="SSF53795">
    <property type="entry name" value="PEP carboxykinase-like"/>
    <property type="match status" value="1"/>
</dbReference>
<comment type="function">
    <text evidence="1">Catalyzes the ATP- as well as the pyrophosphate-dependent phosphorylation of a specific serine residue in HPr, a phosphocarrier protein of the phosphoenolpyruvate-dependent sugar phosphotransferase system (PTS). HprK/P also catalyzes the pyrophosphate-producing, inorganic phosphate-dependent dephosphorylation (phosphorolysis) of seryl-phosphorylated HPr (P-Ser-HPr).</text>
</comment>
<comment type="catalytic activity">
    <reaction evidence="1">
        <text>[HPr protein]-L-serine + ATP = [HPr protein]-O-phospho-L-serine + ADP + H(+)</text>
        <dbReference type="Rhea" id="RHEA:46600"/>
        <dbReference type="Rhea" id="RHEA-COMP:11602"/>
        <dbReference type="Rhea" id="RHEA-COMP:11603"/>
        <dbReference type="ChEBI" id="CHEBI:15378"/>
        <dbReference type="ChEBI" id="CHEBI:29999"/>
        <dbReference type="ChEBI" id="CHEBI:30616"/>
        <dbReference type="ChEBI" id="CHEBI:83421"/>
        <dbReference type="ChEBI" id="CHEBI:456216"/>
    </reaction>
</comment>
<comment type="catalytic activity">
    <reaction evidence="1">
        <text>[HPr protein]-O-phospho-L-serine + phosphate + H(+) = [HPr protein]-L-serine + diphosphate</text>
        <dbReference type="Rhea" id="RHEA:46604"/>
        <dbReference type="Rhea" id="RHEA-COMP:11602"/>
        <dbReference type="Rhea" id="RHEA-COMP:11603"/>
        <dbReference type="ChEBI" id="CHEBI:15378"/>
        <dbReference type="ChEBI" id="CHEBI:29999"/>
        <dbReference type="ChEBI" id="CHEBI:33019"/>
        <dbReference type="ChEBI" id="CHEBI:43474"/>
        <dbReference type="ChEBI" id="CHEBI:83421"/>
    </reaction>
</comment>
<comment type="cofactor">
    <cofactor evidence="1">
        <name>Mg(2+)</name>
        <dbReference type="ChEBI" id="CHEBI:18420"/>
    </cofactor>
</comment>
<comment type="subunit">
    <text evidence="1">Homohexamer.</text>
</comment>
<comment type="domain">
    <text evidence="1">The Walker A ATP-binding motif also binds Pi and PPi.</text>
</comment>
<comment type="miscellaneous">
    <text evidence="1">Both phosphorylation and phosphorolysis are carried out by the same active site and suggest a common mechanism for both reactions.</text>
</comment>
<comment type="similarity">
    <text evidence="1">Belongs to the HPrK/P family.</text>
</comment>